<organismHost>
    <name type="scientific">Bos taurus</name>
    <name type="common">Bovine</name>
    <dbReference type="NCBI Taxonomy" id="9913"/>
</organismHost>
<organismHost>
    <name type="scientific">Felis catus</name>
    <name type="common">Cat</name>
    <name type="synonym">Felis silvestris catus</name>
    <dbReference type="NCBI Taxonomy" id="9685"/>
</organismHost>
<organismHost>
    <name type="scientific">Homo sapiens</name>
    <name type="common">Human</name>
    <dbReference type="NCBI Taxonomy" id="9606"/>
</organismHost>
<organismHost>
    <name type="scientific">Loxodonta africana</name>
    <name type="common">African elephant</name>
    <dbReference type="NCBI Taxonomy" id="9785"/>
</organismHost>
<organismHost>
    <name type="scientific">Microtus agrestis</name>
    <name type="common">Short-tailed field vole</name>
    <dbReference type="NCBI Taxonomy" id="29092"/>
</organismHost>
<organismHost>
    <name type="scientific">Mus musculus</name>
    <name type="common">Mouse</name>
    <dbReference type="NCBI Taxonomy" id="10090"/>
</organismHost>
<organismHost>
    <name type="scientific">Myodes glareolus</name>
    <name type="common">Bank vole</name>
    <name type="synonym">Clethrionomys glareolus</name>
    <dbReference type="NCBI Taxonomy" id="447135"/>
</organismHost>
<sequence>MDIENDIRNRRIIRNISNLLDDDILCDVIITIGDGEEIKAHKTILAAGSTYFKTMFTTPMIARDLVTRVNLQMFDKDAVKNIVQYLYNRHISSMNVIDVLKCADYLLIDDLVADCESYIKDYINHDTCIYMYHKLYEMVHIPIVKYIKRMLMSNIPTLITTDAFKKTVFEILFDIISTNDNVYLYREGYKVTILLKWLEYNHITEEQLLCILSCIDIQNLDKKSRLLLYSNKTINMYPSCIQFLLDNKQNRNIIPRQLCLACHDTNYNVCNPCILVYNINTMEYSVISTIPNHIINYASAIVDNEIIIAGGYNFNNPSLNKVYKINIENKIHVELPPMIKNRCRFSLAVIDDTIYAIGGQNGTNVERTIECYTLGDDKWKMLPDMPIALSSYGMCVLDQYIYIIGGRTQHIDYTSVHTVNSIDMEEDTNISNKVIRYDTVNNIWETLPNFWTGTINPGVVSHKDDIYVVCDIKDEKNVKTCIFRYNTNTYNGWELVTTTESRLSALHTILHDNTIMMLHCYESYMLQDTFNVYTREWNHMCHQHSNSYIMHNILPIY</sequence>
<proteinExistence type="inferred from homology"/>
<comment type="function">
    <text>Probable substrate-specific adapter of CUL3-containing E3 ubiquitin-protein ligases which mediate the ubiquitination and subsequent proteasomal degradation of host target proteins.</text>
</comment>
<comment type="subunit">
    <text evidence="1">Interacts (via BTB domain) with host CUL3.</text>
</comment>
<comment type="subcellular location">
    <subcellularLocation>
        <location evidence="1">Host cytoplasm</location>
    </subcellularLocation>
</comment>
<comment type="domain">
    <text evidence="1">The BTB domain is responsible for the interaction with CUL3 while the Kelch repeat domains supposely serve to recruit the cellular substrates.</text>
</comment>
<gene>
    <name type="primary">KBTB2</name>
    <name type="ordered locus">B19R</name>
</gene>
<accession>O72756</accession>
<organism>
    <name type="scientific">Cowpox virus (strain GRI-90 / Grishak)</name>
    <name type="common">CPV</name>
    <dbReference type="NCBI Taxonomy" id="265871"/>
    <lineage>
        <taxon>Viruses</taxon>
        <taxon>Varidnaviria</taxon>
        <taxon>Bamfordvirae</taxon>
        <taxon>Nucleocytoviricota</taxon>
        <taxon>Pokkesviricetes</taxon>
        <taxon>Chitovirales</taxon>
        <taxon>Poxviridae</taxon>
        <taxon>Chordopoxvirinae</taxon>
        <taxon>Orthopoxvirus</taxon>
        <taxon>Cowpox virus</taxon>
    </lineage>
</organism>
<keyword id="KW-1035">Host cytoplasm</keyword>
<keyword id="KW-0945">Host-virus interaction</keyword>
<keyword id="KW-0880">Kelch repeat</keyword>
<keyword id="KW-1123">Modulation of host E3 ubiquitin ligases by virus</keyword>
<keyword id="KW-1130">Modulation of host ubiquitin pathway by virus</keyword>
<keyword id="KW-0677">Repeat</keyword>
<keyword id="KW-0833">Ubl conjugation pathway</keyword>
<feature type="chain" id="PRO_0000396132" description="Kelch repeat and BTB domain-containing protein 2">
    <location>
        <begin position="1"/>
        <end position="557"/>
    </location>
</feature>
<feature type="domain" description="BTB" evidence="2">
    <location>
        <begin position="26"/>
        <end position="95"/>
    </location>
</feature>
<feature type="domain" description="BACK">
    <location>
        <begin position="133"/>
        <end position="223"/>
    </location>
</feature>
<feature type="repeat" description="Kelch 1">
    <location>
        <begin position="305"/>
        <end position="352"/>
    </location>
</feature>
<feature type="repeat" description="Kelch 2">
    <location>
        <begin position="353"/>
        <end position="399"/>
    </location>
</feature>
<feature type="repeat" description="Kelch 3">
    <location>
        <begin position="401"/>
        <end position="464"/>
    </location>
</feature>
<dbReference type="EMBL" id="X94355">
    <property type="protein sequence ID" value="CAD90745.1"/>
    <property type="molecule type" value="Genomic_DNA"/>
</dbReference>
<dbReference type="SMR" id="O72756"/>
<dbReference type="Proteomes" id="UP000137384">
    <property type="component" value="Segment"/>
</dbReference>
<dbReference type="GO" id="GO:0030430">
    <property type="term" value="C:host cell cytoplasm"/>
    <property type="evidence" value="ECO:0007669"/>
    <property type="project" value="UniProtKB-SubCell"/>
</dbReference>
<dbReference type="GO" id="GO:0039648">
    <property type="term" value="P:symbiont-mediated perturbation of host ubiquitin-like protein modification"/>
    <property type="evidence" value="ECO:0007669"/>
    <property type="project" value="UniProtKB-KW"/>
</dbReference>
<dbReference type="CDD" id="cd18186">
    <property type="entry name" value="BTB_POZ_ZBTB_KLHL-like"/>
    <property type="match status" value="1"/>
</dbReference>
<dbReference type="Gene3D" id="2.120.10.80">
    <property type="entry name" value="Kelch-type beta propeller"/>
    <property type="match status" value="1"/>
</dbReference>
<dbReference type="Gene3D" id="3.30.710.10">
    <property type="entry name" value="Potassium Channel Kv1.1, Chain A"/>
    <property type="match status" value="1"/>
</dbReference>
<dbReference type="InterPro" id="IPR011705">
    <property type="entry name" value="BACK"/>
</dbReference>
<dbReference type="InterPro" id="IPR000210">
    <property type="entry name" value="BTB/POZ_dom"/>
</dbReference>
<dbReference type="InterPro" id="IPR015915">
    <property type="entry name" value="Kelch-typ_b-propeller"/>
</dbReference>
<dbReference type="InterPro" id="IPR006652">
    <property type="entry name" value="Kelch_1"/>
</dbReference>
<dbReference type="InterPro" id="IPR011333">
    <property type="entry name" value="SKP1/BTB/POZ_sf"/>
</dbReference>
<dbReference type="PANTHER" id="PTHR45632:SF3">
    <property type="entry name" value="KELCH-LIKE PROTEIN 32"/>
    <property type="match status" value="1"/>
</dbReference>
<dbReference type="PANTHER" id="PTHR45632">
    <property type="entry name" value="LD33804P"/>
    <property type="match status" value="1"/>
</dbReference>
<dbReference type="Pfam" id="PF07707">
    <property type="entry name" value="BACK"/>
    <property type="match status" value="1"/>
</dbReference>
<dbReference type="Pfam" id="PF00651">
    <property type="entry name" value="BTB"/>
    <property type="match status" value="1"/>
</dbReference>
<dbReference type="Pfam" id="PF24681">
    <property type="entry name" value="Kelch_KLHDC2_KLHL20_DRC7"/>
    <property type="match status" value="1"/>
</dbReference>
<dbReference type="SMART" id="SM00225">
    <property type="entry name" value="BTB"/>
    <property type="match status" value="1"/>
</dbReference>
<dbReference type="SMART" id="SM00612">
    <property type="entry name" value="Kelch"/>
    <property type="match status" value="3"/>
</dbReference>
<dbReference type="SUPFAM" id="SSF117281">
    <property type="entry name" value="Kelch motif"/>
    <property type="match status" value="1"/>
</dbReference>
<dbReference type="SUPFAM" id="SSF54695">
    <property type="entry name" value="POZ domain"/>
    <property type="match status" value="1"/>
</dbReference>
<dbReference type="PROSITE" id="PS50097">
    <property type="entry name" value="BTB"/>
    <property type="match status" value="1"/>
</dbReference>
<reference key="1">
    <citation type="submission" date="2003-03" db="EMBL/GenBank/DDBJ databases">
        <title>Structure-function and organization of cowpox virus strain GRI-90 complete genome.</title>
        <authorList>
            <person name="Shchelkunov S.N."/>
            <person name="Safronov P.F."/>
            <person name="Totmenin A.V."/>
            <person name="Miheev M.V."/>
            <person name="Ryazankina O.I."/>
            <person name="Petrov N.A."/>
            <person name="Gutorov V.V."/>
            <person name="Kotwal G.J."/>
            <person name="Sandakhchiev L.S."/>
        </authorList>
    </citation>
    <scope>NUCLEOTIDE SEQUENCE [LARGE SCALE GENOMIC DNA]</scope>
</reference>
<evidence type="ECO:0000250" key="1"/>
<evidence type="ECO:0000255" key="2">
    <source>
        <dbReference type="PROSITE-ProRule" id="PRU00037"/>
    </source>
</evidence>
<name>KBTB2_CWPXG</name>
<protein>
    <recommendedName>
        <fullName>Kelch repeat and BTB domain-containing protein 2</fullName>
    </recommendedName>
</protein>